<reference key="1">
    <citation type="journal article" date="2001" name="Lancet">
        <title>Whole genome sequencing of meticillin-resistant Staphylococcus aureus.</title>
        <authorList>
            <person name="Kuroda M."/>
            <person name="Ohta T."/>
            <person name="Uchiyama I."/>
            <person name="Baba T."/>
            <person name="Yuzawa H."/>
            <person name="Kobayashi I."/>
            <person name="Cui L."/>
            <person name="Oguchi A."/>
            <person name="Aoki K."/>
            <person name="Nagai Y."/>
            <person name="Lian J.-Q."/>
            <person name="Ito T."/>
            <person name="Kanamori M."/>
            <person name="Matsumaru H."/>
            <person name="Maruyama A."/>
            <person name="Murakami H."/>
            <person name="Hosoyama A."/>
            <person name="Mizutani-Ui Y."/>
            <person name="Takahashi N.K."/>
            <person name="Sawano T."/>
            <person name="Inoue R."/>
            <person name="Kaito C."/>
            <person name="Sekimizu K."/>
            <person name="Hirakawa H."/>
            <person name="Kuhara S."/>
            <person name="Goto S."/>
            <person name="Yabuzaki J."/>
            <person name="Kanehisa M."/>
            <person name="Yamashita A."/>
            <person name="Oshima K."/>
            <person name="Furuya K."/>
            <person name="Yoshino C."/>
            <person name="Shiba T."/>
            <person name="Hattori M."/>
            <person name="Ogasawara N."/>
            <person name="Hayashi H."/>
            <person name="Hiramatsu K."/>
        </authorList>
    </citation>
    <scope>NUCLEOTIDE SEQUENCE [LARGE SCALE GENOMIC DNA]</scope>
    <source>
        <strain>N315</strain>
    </source>
</reference>
<reference key="2">
    <citation type="submission" date="2007-10" db="UniProtKB">
        <title>Shotgun proteomic analysis of total and membrane protein extracts of S. aureus strain N315.</title>
        <authorList>
            <person name="Vaezzadeh A.R."/>
            <person name="Deshusses J."/>
            <person name="Lescuyer P."/>
            <person name="Hochstrasser D.F."/>
        </authorList>
    </citation>
    <scope>IDENTIFICATION BY MASS SPECTROMETRY [LARGE SCALE ANALYSIS]</scope>
    <source>
        <strain>N315</strain>
    </source>
</reference>
<comment type="function">
    <text evidence="1">A type II topoisomerase that negatively supercoils closed circular double-stranded (ds) DNA in an ATP-dependent manner to modulate DNA topology and maintain chromosomes in an underwound state. Negative supercoiling favors strand separation, and DNA replication, transcription, recombination and repair, all of which involve strand separation. Also able to catalyze the interconversion of other topological isomers of dsDNA rings, including catenanes and knotted rings. Type II topoisomerases break and join 2 DNA strands simultaneously in an ATP-dependent manner.</text>
</comment>
<comment type="catalytic activity">
    <reaction evidence="1">
        <text>ATP-dependent breakage, passage and rejoining of double-stranded DNA.</text>
        <dbReference type="EC" id="5.6.2.2"/>
    </reaction>
</comment>
<comment type="subunit">
    <text evidence="1">Heterotetramer, composed of two GyrA and two GyrB chains. In the heterotetramer, GyrA contains the active site tyrosine that forms a transient covalent intermediate with DNA, while GyrB binds cofactors and catalyzes ATP hydrolysis.</text>
</comment>
<comment type="subcellular location">
    <subcellularLocation>
        <location evidence="1">Cytoplasm</location>
    </subcellularLocation>
</comment>
<comment type="miscellaneous">
    <text evidence="1">Few gyrases are as efficient as E.coli at forming negative supercoils. Not all organisms have 2 type II topoisomerases; in organisms with a single type II topoisomerase this enzyme also has to decatenate newly replicated chromosomes.</text>
</comment>
<comment type="similarity">
    <text evidence="1">Belongs to the type II topoisomerase GyrA/ParC subunit family.</text>
</comment>
<dbReference type="EC" id="5.6.2.2" evidence="1"/>
<dbReference type="EMBL" id="BA000018">
    <property type="protein sequence ID" value="BAB41222.1"/>
    <property type="molecule type" value="Genomic_DNA"/>
</dbReference>
<dbReference type="PIR" id="F89758">
    <property type="entry name" value="F89758"/>
</dbReference>
<dbReference type="RefSeq" id="WP_000819096.1">
    <property type="nucleotide sequence ID" value="NC_002745.2"/>
</dbReference>
<dbReference type="PDB" id="2XCO">
    <property type="method" value="X-ray"/>
    <property type="resolution" value="3.10 A"/>
    <property type="chains" value="A=2-491"/>
</dbReference>
<dbReference type="PDB" id="2XCQ">
    <property type="method" value="X-ray"/>
    <property type="resolution" value="2.98 A"/>
    <property type="chains" value="A=2-491"/>
</dbReference>
<dbReference type="PDB" id="2XCR">
    <property type="method" value="X-ray"/>
    <property type="resolution" value="3.50 A"/>
    <property type="chains" value="B/D/S/U=2-491"/>
</dbReference>
<dbReference type="PDB" id="2XCS">
    <property type="method" value="X-ray"/>
    <property type="resolution" value="2.10 A"/>
    <property type="chains" value="B/D=2-491"/>
</dbReference>
<dbReference type="PDB" id="2XCT">
    <property type="method" value="X-ray"/>
    <property type="resolution" value="3.35 A"/>
    <property type="chains" value="B/D/S/U=2-491"/>
</dbReference>
<dbReference type="PDB" id="4BUL">
    <property type="method" value="X-ray"/>
    <property type="resolution" value="2.60 A"/>
    <property type="chains" value="A/C=2-491"/>
</dbReference>
<dbReference type="PDB" id="5CDM">
    <property type="method" value="X-ray"/>
    <property type="resolution" value="2.50 A"/>
    <property type="chains" value="A/C=9-490"/>
</dbReference>
<dbReference type="PDB" id="5CDN">
    <property type="method" value="X-ray"/>
    <property type="resolution" value="2.79 A"/>
    <property type="chains" value="A/C/R/T=10-490"/>
</dbReference>
<dbReference type="PDB" id="5CDO">
    <property type="method" value="X-ray"/>
    <property type="resolution" value="3.15 A"/>
    <property type="chains" value="A/C/R/T=9-490"/>
</dbReference>
<dbReference type="PDB" id="5CDP">
    <property type="method" value="X-ray"/>
    <property type="resolution" value="2.45 A"/>
    <property type="chains" value="A/C=9-491"/>
</dbReference>
<dbReference type="PDB" id="5CDQ">
    <property type="method" value="X-ray"/>
    <property type="resolution" value="2.95 A"/>
    <property type="chains" value="A/C/R/T=10-490"/>
</dbReference>
<dbReference type="PDB" id="5CDR">
    <property type="method" value="X-ray"/>
    <property type="resolution" value="2.65 A"/>
    <property type="chains" value="A/C=9-491"/>
</dbReference>
<dbReference type="PDB" id="5IWI">
    <property type="method" value="X-ray"/>
    <property type="resolution" value="1.98 A"/>
    <property type="chains" value="A/C=2-491"/>
</dbReference>
<dbReference type="PDB" id="5IWM">
    <property type="method" value="X-ray"/>
    <property type="resolution" value="2.50 A"/>
    <property type="chains" value="A/C=2-491"/>
</dbReference>
<dbReference type="PDB" id="5NPK">
    <property type="method" value="X-ray"/>
    <property type="resolution" value="1.98 A"/>
    <property type="chains" value="B/D/b/d=2-491"/>
</dbReference>
<dbReference type="PDB" id="5NPP">
    <property type="method" value="X-ray"/>
    <property type="resolution" value="2.22 A"/>
    <property type="chains" value="B/D=2-491"/>
</dbReference>
<dbReference type="PDB" id="6FM4">
    <property type="method" value="X-ray"/>
    <property type="resolution" value="2.70 A"/>
    <property type="chains" value="B/D=2-491"/>
</dbReference>
<dbReference type="PDB" id="6FQM">
    <property type="method" value="X-ray"/>
    <property type="resolution" value="3.06 A"/>
    <property type="chains" value="A/C/a/c=2-491"/>
</dbReference>
<dbReference type="PDB" id="6FQS">
    <property type="method" value="X-ray"/>
    <property type="resolution" value="3.11 A"/>
    <property type="chains" value="A/C=2-491"/>
</dbReference>
<dbReference type="PDB" id="6FQV">
    <property type="method" value="X-ray"/>
    <property type="resolution" value="2.60 A"/>
    <property type="chains" value="A/C/R/T=2-491"/>
</dbReference>
<dbReference type="PDB" id="6QTK">
    <property type="method" value="X-ray"/>
    <property type="resolution" value="2.31 A"/>
    <property type="chains" value="A/C=2-491"/>
</dbReference>
<dbReference type="PDB" id="6QTP">
    <property type="method" value="X-ray"/>
    <property type="resolution" value="2.37 A"/>
    <property type="chains" value="A/C=2-491"/>
</dbReference>
<dbReference type="PDB" id="6QX1">
    <property type="method" value="X-ray"/>
    <property type="resolution" value="2.65 A"/>
    <property type="chains" value="A/C=2-491"/>
</dbReference>
<dbReference type="PDB" id="7FVS">
    <property type="method" value="X-ray"/>
    <property type="resolution" value="2.16 A"/>
    <property type="chains" value="A/B=2-491"/>
</dbReference>
<dbReference type="PDB" id="7FVT">
    <property type="method" value="X-ray"/>
    <property type="resolution" value="2.08 A"/>
    <property type="chains" value="A/B=2-491"/>
</dbReference>
<dbReference type="PDB" id="7MVS">
    <property type="method" value="X-ray"/>
    <property type="resolution" value="2.60 A"/>
    <property type="chains" value="A/B=2-491"/>
</dbReference>
<dbReference type="PDB" id="8BP2">
    <property type="method" value="X-ray"/>
    <property type="resolution" value="2.80 A"/>
    <property type="chains" value="AAA/CCC=2-491"/>
</dbReference>
<dbReference type="PDBsum" id="2XCO"/>
<dbReference type="PDBsum" id="2XCQ"/>
<dbReference type="PDBsum" id="2XCR"/>
<dbReference type="PDBsum" id="2XCS"/>
<dbReference type="PDBsum" id="2XCT"/>
<dbReference type="PDBsum" id="4BUL"/>
<dbReference type="PDBsum" id="5CDM"/>
<dbReference type="PDBsum" id="5CDN"/>
<dbReference type="PDBsum" id="5CDO"/>
<dbReference type="PDBsum" id="5CDP"/>
<dbReference type="PDBsum" id="5CDQ"/>
<dbReference type="PDBsum" id="5CDR"/>
<dbReference type="PDBsum" id="5IWI"/>
<dbReference type="PDBsum" id="5IWM"/>
<dbReference type="PDBsum" id="5NPK"/>
<dbReference type="PDBsum" id="5NPP"/>
<dbReference type="PDBsum" id="6FM4"/>
<dbReference type="PDBsum" id="6FQM"/>
<dbReference type="PDBsum" id="6FQS"/>
<dbReference type="PDBsum" id="6FQV"/>
<dbReference type="PDBsum" id="6QTK"/>
<dbReference type="PDBsum" id="6QTP"/>
<dbReference type="PDBsum" id="6QX1"/>
<dbReference type="PDBsum" id="7FVS"/>
<dbReference type="PDBsum" id="7FVT"/>
<dbReference type="PDBsum" id="7MVS"/>
<dbReference type="PDBsum" id="8BP2"/>
<dbReference type="SMR" id="Q99XG5"/>
<dbReference type="EnsemblBacteria" id="BAB41222">
    <property type="protein sequence ID" value="BAB41222"/>
    <property type="gene ID" value="BAB41222"/>
</dbReference>
<dbReference type="KEGG" id="sau:SA0006"/>
<dbReference type="HOGENOM" id="CLU_002977_6_1_9"/>
<dbReference type="BRENDA" id="5.6.2.2">
    <property type="organism ID" value="3352"/>
</dbReference>
<dbReference type="EvolutionaryTrace" id="Q99XG5"/>
<dbReference type="GO" id="GO:0005694">
    <property type="term" value="C:chromosome"/>
    <property type="evidence" value="ECO:0007669"/>
    <property type="project" value="InterPro"/>
</dbReference>
<dbReference type="GO" id="GO:0005737">
    <property type="term" value="C:cytoplasm"/>
    <property type="evidence" value="ECO:0007669"/>
    <property type="project" value="UniProtKB-SubCell"/>
</dbReference>
<dbReference type="GO" id="GO:0009330">
    <property type="term" value="C:DNA topoisomerase type II (double strand cut, ATP-hydrolyzing) complex"/>
    <property type="evidence" value="ECO:0007669"/>
    <property type="project" value="TreeGrafter"/>
</dbReference>
<dbReference type="GO" id="GO:0005524">
    <property type="term" value="F:ATP binding"/>
    <property type="evidence" value="ECO:0007669"/>
    <property type="project" value="UniProtKB-UniRule"/>
</dbReference>
<dbReference type="GO" id="GO:0003677">
    <property type="term" value="F:DNA binding"/>
    <property type="evidence" value="ECO:0007669"/>
    <property type="project" value="UniProtKB-UniRule"/>
</dbReference>
<dbReference type="GO" id="GO:0034335">
    <property type="term" value="F:DNA negative supercoiling activity"/>
    <property type="evidence" value="ECO:0007669"/>
    <property type="project" value="UniProtKB-ARBA"/>
</dbReference>
<dbReference type="GO" id="GO:0006265">
    <property type="term" value="P:DNA topological change"/>
    <property type="evidence" value="ECO:0007669"/>
    <property type="project" value="UniProtKB-UniRule"/>
</dbReference>
<dbReference type="GO" id="GO:0006261">
    <property type="term" value="P:DNA-templated DNA replication"/>
    <property type="evidence" value="ECO:0007669"/>
    <property type="project" value="UniProtKB-UniRule"/>
</dbReference>
<dbReference type="GO" id="GO:0046677">
    <property type="term" value="P:response to antibiotic"/>
    <property type="evidence" value="ECO:0007669"/>
    <property type="project" value="UniProtKB-KW"/>
</dbReference>
<dbReference type="CDD" id="cd00187">
    <property type="entry name" value="TOP4c"/>
    <property type="match status" value="1"/>
</dbReference>
<dbReference type="FunFam" id="1.10.268.10:FF:000001">
    <property type="entry name" value="DNA gyrase subunit A"/>
    <property type="match status" value="1"/>
</dbReference>
<dbReference type="FunFam" id="2.120.10.90:FF:000004">
    <property type="entry name" value="DNA gyrase subunit A"/>
    <property type="match status" value="1"/>
</dbReference>
<dbReference type="FunFam" id="3.30.1360.40:FF:000002">
    <property type="entry name" value="DNA gyrase subunit A"/>
    <property type="match status" value="1"/>
</dbReference>
<dbReference type="FunFam" id="3.90.199.10:FF:000001">
    <property type="entry name" value="DNA gyrase subunit A"/>
    <property type="match status" value="1"/>
</dbReference>
<dbReference type="Gene3D" id="3.30.1360.40">
    <property type="match status" value="1"/>
</dbReference>
<dbReference type="Gene3D" id="2.120.10.90">
    <property type="entry name" value="DNA gyrase/topoisomerase IV, subunit A, C-terminal"/>
    <property type="match status" value="1"/>
</dbReference>
<dbReference type="Gene3D" id="3.90.199.10">
    <property type="entry name" value="Topoisomerase II, domain 5"/>
    <property type="match status" value="1"/>
</dbReference>
<dbReference type="Gene3D" id="1.10.268.10">
    <property type="entry name" value="Topoisomerase, domain 3"/>
    <property type="match status" value="1"/>
</dbReference>
<dbReference type="HAMAP" id="MF_01897">
    <property type="entry name" value="GyrA"/>
    <property type="match status" value="1"/>
</dbReference>
<dbReference type="InterPro" id="IPR005743">
    <property type="entry name" value="GyrA"/>
</dbReference>
<dbReference type="InterPro" id="IPR006691">
    <property type="entry name" value="GyrA/parC_rep"/>
</dbReference>
<dbReference type="InterPro" id="IPR035516">
    <property type="entry name" value="Gyrase/topoIV_suA_C"/>
</dbReference>
<dbReference type="InterPro" id="IPR013760">
    <property type="entry name" value="Topo_IIA-like_dom_sf"/>
</dbReference>
<dbReference type="InterPro" id="IPR013758">
    <property type="entry name" value="Topo_IIA_A/C_ab"/>
</dbReference>
<dbReference type="InterPro" id="IPR013757">
    <property type="entry name" value="Topo_IIA_A_a_sf"/>
</dbReference>
<dbReference type="InterPro" id="IPR002205">
    <property type="entry name" value="Topo_IIA_dom_A"/>
</dbReference>
<dbReference type="InterPro" id="IPR050220">
    <property type="entry name" value="Type_II_DNA_Topoisomerases"/>
</dbReference>
<dbReference type="NCBIfam" id="TIGR01063">
    <property type="entry name" value="gyrA"/>
    <property type="match status" value="1"/>
</dbReference>
<dbReference type="NCBIfam" id="NF004043">
    <property type="entry name" value="PRK05560.1"/>
    <property type="match status" value="1"/>
</dbReference>
<dbReference type="NCBIfam" id="NF004044">
    <property type="entry name" value="PRK05561.1"/>
    <property type="match status" value="1"/>
</dbReference>
<dbReference type="PANTHER" id="PTHR43493:SF5">
    <property type="entry name" value="DNA GYRASE SUBUNIT A, CHLOROPLASTIC_MITOCHONDRIAL"/>
    <property type="match status" value="1"/>
</dbReference>
<dbReference type="PANTHER" id="PTHR43493">
    <property type="entry name" value="DNA GYRASE/TOPOISOMERASE SUBUNIT A"/>
    <property type="match status" value="1"/>
</dbReference>
<dbReference type="Pfam" id="PF03989">
    <property type="entry name" value="DNA_gyraseA_C"/>
    <property type="match status" value="6"/>
</dbReference>
<dbReference type="Pfam" id="PF00521">
    <property type="entry name" value="DNA_topoisoIV"/>
    <property type="match status" value="1"/>
</dbReference>
<dbReference type="SMART" id="SM00434">
    <property type="entry name" value="TOP4c"/>
    <property type="match status" value="1"/>
</dbReference>
<dbReference type="SUPFAM" id="SSF101904">
    <property type="entry name" value="GyrA/ParC C-terminal domain-like"/>
    <property type="match status" value="1"/>
</dbReference>
<dbReference type="SUPFAM" id="SSF56719">
    <property type="entry name" value="Type II DNA topoisomerase"/>
    <property type="match status" value="1"/>
</dbReference>
<dbReference type="PROSITE" id="PS52040">
    <property type="entry name" value="TOPO_IIA"/>
    <property type="match status" value="1"/>
</dbReference>
<evidence type="ECO:0000255" key="1">
    <source>
        <dbReference type="HAMAP-Rule" id="MF_01897"/>
    </source>
</evidence>
<evidence type="ECO:0000255" key="2">
    <source>
        <dbReference type="PROSITE-ProRule" id="PRU01384"/>
    </source>
</evidence>
<evidence type="ECO:0000256" key="3">
    <source>
        <dbReference type="SAM" id="MobiDB-lite"/>
    </source>
</evidence>
<evidence type="ECO:0007829" key="4">
    <source>
        <dbReference type="PDB" id="2XCO"/>
    </source>
</evidence>
<evidence type="ECO:0007829" key="5">
    <source>
        <dbReference type="PDB" id="2XCQ"/>
    </source>
</evidence>
<evidence type="ECO:0007829" key="6">
    <source>
        <dbReference type="PDB" id="2XCT"/>
    </source>
</evidence>
<evidence type="ECO:0007829" key="7">
    <source>
        <dbReference type="PDB" id="5CDM"/>
    </source>
</evidence>
<evidence type="ECO:0007829" key="8">
    <source>
        <dbReference type="PDB" id="5IWI"/>
    </source>
</evidence>
<evidence type="ECO:0007829" key="9">
    <source>
        <dbReference type="PDB" id="5NPK"/>
    </source>
</evidence>
<organism>
    <name type="scientific">Staphylococcus aureus (strain N315)</name>
    <dbReference type="NCBI Taxonomy" id="158879"/>
    <lineage>
        <taxon>Bacteria</taxon>
        <taxon>Bacillati</taxon>
        <taxon>Bacillota</taxon>
        <taxon>Bacilli</taxon>
        <taxon>Bacillales</taxon>
        <taxon>Staphylococcaceae</taxon>
        <taxon>Staphylococcus</taxon>
    </lineage>
</organism>
<keyword id="KW-0002">3D-structure</keyword>
<keyword id="KW-0046">Antibiotic resistance</keyword>
<keyword id="KW-0067">ATP-binding</keyword>
<keyword id="KW-0963">Cytoplasm</keyword>
<keyword id="KW-0238">DNA-binding</keyword>
<keyword id="KW-0413">Isomerase</keyword>
<keyword id="KW-0547">Nucleotide-binding</keyword>
<keyword id="KW-0799">Topoisomerase</keyword>
<sequence length="889" mass="99625">MAELPQSRINERNITSEMRESFLDYAMSVIVARALPDVRDGLKPVHRRILYGLNEQGMTPDKSYKKSARIVGDVMGKYHPHGDSSIYEAMVRMAQDFSYRYPLVDGQGNFGSMDGDGAAAMRYTEARMTKITLELLRDINKDTIDFIDNYDGNEREPSVLPARFPNLLANGASGIAVGMATNIPPHNLTELINGVLSLSKNPDISIAELMEDIEGPDFPTAGLILGKSGIRRAYETGRGSIQMRSRAVIEERGGGRQRIVVTEIPFQVNKARMIEKIAELVRDKKIDGITDLRDETSLRTGVRVVIDVRKDANASVILNNLYKQTPLQTSFGVNMIALVNGRPKLINLKEALVHYLEHQKTVVRRRTQYNLRKAKDRAHILEGLRIALDHIDEIISTIRESDTDKVAMESLQQRFKLSEKQAQAILDMRLRRLTGLERDKIEAEYNELLNYISELETILADEEVLLQLVRDELTEIRDRFGDDRRTEIQLGGFEDLEDEDLIPEEQIVITLSHNNYIKRLPVSTYRAQNRGGRGVQGMNTLEEDFVSQLVTLSTHDHVLFFTNKGRVYKLKGYEVPELSRQSKGIPVVNAIELENDEVISTMIAVKDLESEDNFLVFATKRGVVKRSALSNFSRINRNGKIAISFREDDELIAVRLTSGQEDILIGTSHASLIRFPESTLRPLGRTATGVKGITLREGDEVVGLDVAHANSVDEVLVVTENGYGKRTPVNDYRLSNRGGKGIKTATITERNGNVVCITTVTGEEDLMIVTNAGVIIRLDVADISQNGRAAQGVRLIRLGDDQFVSTVAKVKEDAEDETNEDEQSTSTVSEDGTEQQREAVVNDETPGNAIHTEVIDSEENDEDGRIEVRQDFMDRVEEDIQQSSDEDEE</sequence>
<proteinExistence type="evidence at protein level"/>
<accession>Q99XG5</accession>
<name>GYRA_STAAN</name>
<feature type="chain" id="PRO_0000145253" description="DNA gyrase subunit A">
    <location>
        <begin position="1"/>
        <end position="889"/>
    </location>
</feature>
<feature type="domain" description="Topo IIA-type catalytic" evidence="2">
    <location>
        <begin position="35"/>
        <end position="501"/>
    </location>
</feature>
<feature type="region of interest" description="Disordered" evidence="3">
    <location>
        <begin position="810"/>
        <end position="889"/>
    </location>
</feature>
<feature type="short sequence motif" description="GyrA-box" evidence="1">
    <location>
        <begin position="528"/>
        <end position="534"/>
    </location>
</feature>
<feature type="compositionally biased region" description="Acidic residues" evidence="3">
    <location>
        <begin position="813"/>
        <end position="823"/>
    </location>
</feature>
<feature type="compositionally biased region" description="Basic and acidic residues" evidence="3">
    <location>
        <begin position="863"/>
        <end position="875"/>
    </location>
</feature>
<feature type="compositionally biased region" description="Acidic residues" evidence="3">
    <location>
        <begin position="876"/>
        <end position="889"/>
    </location>
</feature>
<feature type="active site" description="O-(5'-phospho-DNA)-tyrosine intermediate" evidence="1">
    <location>
        <position position="123"/>
    </location>
</feature>
<feature type="strand" evidence="8">
    <location>
        <begin position="11"/>
        <end position="13"/>
    </location>
</feature>
<feature type="helix" evidence="8">
    <location>
        <begin position="14"/>
        <end position="32"/>
    </location>
</feature>
<feature type="turn" evidence="8">
    <location>
        <begin position="38"/>
        <end position="40"/>
    </location>
</feature>
<feature type="helix" evidence="8">
    <location>
        <begin position="44"/>
        <end position="55"/>
    </location>
</feature>
<feature type="strand" evidence="7">
    <location>
        <begin position="60"/>
        <end position="62"/>
    </location>
</feature>
<feature type="helix" evidence="8">
    <location>
        <begin position="67"/>
        <end position="77"/>
    </location>
</feature>
<feature type="helix" evidence="8">
    <location>
        <begin position="83"/>
        <end position="93"/>
    </location>
</feature>
<feature type="turn" evidence="8">
    <location>
        <begin position="96"/>
        <end position="98"/>
    </location>
</feature>
<feature type="strand" evidence="6">
    <location>
        <begin position="99"/>
        <end position="101"/>
    </location>
</feature>
<feature type="strand" evidence="8">
    <location>
        <begin position="103"/>
        <end position="108"/>
    </location>
</feature>
<feature type="turn" evidence="8">
    <location>
        <begin position="121"/>
        <end position="123"/>
    </location>
</feature>
<feature type="strand" evidence="8">
    <location>
        <begin position="125"/>
        <end position="128"/>
    </location>
</feature>
<feature type="helix" evidence="8">
    <location>
        <begin position="130"/>
        <end position="136"/>
    </location>
</feature>
<feature type="turn" evidence="8">
    <location>
        <begin position="137"/>
        <end position="142"/>
    </location>
</feature>
<feature type="strand" evidence="8">
    <location>
        <begin position="146"/>
        <end position="148"/>
    </location>
</feature>
<feature type="strand" evidence="8">
    <location>
        <begin position="155"/>
        <end position="159"/>
    </location>
</feature>
<feature type="helix" evidence="8">
    <location>
        <begin position="166"/>
        <end position="170"/>
    </location>
</feature>
<feature type="strand" evidence="8">
    <location>
        <begin position="172"/>
        <end position="175"/>
    </location>
</feature>
<feature type="strand" evidence="8">
    <location>
        <begin position="180"/>
        <end position="183"/>
    </location>
</feature>
<feature type="helix" evidence="8">
    <location>
        <begin position="188"/>
        <end position="200"/>
    </location>
</feature>
<feature type="helix" evidence="8">
    <location>
        <begin position="206"/>
        <end position="212"/>
    </location>
</feature>
<feature type="strand" evidence="8">
    <location>
        <begin position="223"/>
        <end position="225"/>
    </location>
</feature>
<feature type="helix" evidence="8">
    <location>
        <begin position="228"/>
        <end position="236"/>
    </location>
</feature>
<feature type="strand" evidence="8">
    <location>
        <begin position="237"/>
        <end position="244"/>
    </location>
</feature>
<feature type="strand" evidence="8">
    <location>
        <begin position="246"/>
        <end position="253"/>
    </location>
</feature>
<feature type="strand" evidence="8">
    <location>
        <begin position="256"/>
        <end position="263"/>
    </location>
</feature>
<feature type="helix" evidence="8">
    <location>
        <begin position="270"/>
        <end position="282"/>
    </location>
</feature>
<feature type="strand" evidence="5">
    <location>
        <begin position="284"/>
        <end position="286"/>
    </location>
</feature>
<feature type="strand" evidence="8">
    <location>
        <begin position="288"/>
        <end position="294"/>
    </location>
</feature>
<feature type="turn" evidence="8">
    <location>
        <begin position="298"/>
        <end position="300"/>
    </location>
</feature>
<feature type="strand" evidence="8">
    <location>
        <begin position="304"/>
        <end position="308"/>
    </location>
</feature>
<feature type="strand" evidence="9">
    <location>
        <begin position="310"/>
        <end position="312"/>
    </location>
</feature>
<feature type="helix" evidence="8">
    <location>
        <begin position="314"/>
        <end position="324"/>
    </location>
</feature>
<feature type="strand" evidence="8">
    <location>
        <begin position="328"/>
        <end position="334"/>
    </location>
</feature>
<feature type="strand" evidence="8">
    <location>
        <begin position="336"/>
        <end position="339"/>
    </location>
</feature>
<feature type="strand" evidence="8">
    <location>
        <begin position="342"/>
        <end position="345"/>
    </location>
</feature>
<feature type="helix" evidence="8">
    <location>
        <begin position="348"/>
        <end position="389"/>
    </location>
</feature>
<feature type="helix" evidence="8">
    <location>
        <begin position="391"/>
        <end position="400"/>
    </location>
</feature>
<feature type="helix" evidence="8">
    <location>
        <begin position="404"/>
        <end position="415"/>
    </location>
</feature>
<feature type="helix" evidence="8">
    <location>
        <begin position="419"/>
        <end position="427"/>
    </location>
</feature>
<feature type="helix" evidence="8">
    <location>
        <begin position="430"/>
        <end position="433"/>
    </location>
</feature>
<feature type="strand" evidence="4">
    <location>
        <begin position="434"/>
        <end position="436"/>
    </location>
</feature>
<feature type="helix" evidence="8">
    <location>
        <begin position="437"/>
        <end position="460"/>
    </location>
</feature>
<feature type="helix" evidence="8">
    <location>
        <begin position="462"/>
        <end position="480"/>
    </location>
</feature>
<feature type="strand" evidence="8">
    <location>
        <begin position="486"/>
        <end position="489"/>
    </location>
</feature>
<gene>
    <name evidence="1" type="primary">gyrA</name>
    <name type="ordered locus">SA0006</name>
</gene>
<protein>
    <recommendedName>
        <fullName evidence="1">DNA gyrase subunit A</fullName>
        <ecNumber evidence="1">5.6.2.2</ecNumber>
    </recommendedName>
</protein>